<evidence type="ECO:0000255" key="1">
    <source>
        <dbReference type="HAMAP-Rule" id="MF_01548"/>
    </source>
</evidence>
<gene>
    <name type="ordered locus">lwe1624</name>
</gene>
<comment type="similarity">
    <text evidence="1">Belongs to the UPF0354 family.</text>
</comment>
<sequence length="266" mass="30591">MAKMTTLKMKERLEKELKAPNRQFAYNRDNDTLSITQDGKKVTLTIPQIIANYENDGDEAIEKIIYYVEEGFQAASGKVELRNNQSNIYPVVRATSFPVETKTGERLLADEHTAETKIFYAFDLGKSYRFIEESMLEKENITREQIREFAFQNLAKLDIPLKKDSVNGNDFYFVRTNDGYDASRLLNVNFLRDMREKLTGEMVLAVPHQDVLIIGDIQDNTGYDVLAHMTMDFFADGLVPITSLPFVYNNGKLEPIFIMAKNRLKE</sequence>
<proteinExistence type="inferred from homology"/>
<organism>
    <name type="scientific">Listeria welshimeri serovar 6b (strain ATCC 35897 / DSM 20650 / CCUG 15529 / CIP 8149 / NCTC 11857 / SLCC 5334 / V8)</name>
    <dbReference type="NCBI Taxonomy" id="386043"/>
    <lineage>
        <taxon>Bacteria</taxon>
        <taxon>Bacillati</taxon>
        <taxon>Bacillota</taxon>
        <taxon>Bacilli</taxon>
        <taxon>Bacillales</taxon>
        <taxon>Listeriaceae</taxon>
        <taxon>Listeria</taxon>
    </lineage>
</organism>
<accession>A0AJ60</accession>
<dbReference type="EMBL" id="AM263198">
    <property type="protein sequence ID" value="CAK21042.1"/>
    <property type="molecule type" value="Genomic_DNA"/>
</dbReference>
<dbReference type="RefSeq" id="WP_011702408.1">
    <property type="nucleotide sequence ID" value="NC_008555.1"/>
</dbReference>
<dbReference type="SMR" id="A0AJ60"/>
<dbReference type="STRING" id="386043.lwe1624"/>
<dbReference type="GeneID" id="61189500"/>
<dbReference type="KEGG" id="lwe:lwe1624"/>
<dbReference type="eggNOG" id="COG4848">
    <property type="taxonomic scope" value="Bacteria"/>
</dbReference>
<dbReference type="HOGENOM" id="CLU_085634_0_0_9"/>
<dbReference type="OrthoDB" id="154553at2"/>
<dbReference type="Proteomes" id="UP000000779">
    <property type="component" value="Chromosome"/>
</dbReference>
<dbReference type="HAMAP" id="MF_01548">
    <property type="entry name" value="UPF0354"/>
    <property type="match status" value="1"/>
</dbReference>
<dbReference type="InterPro" id="IPR010838">
    <property type="entry name" value="DUF1444"/>
</dbReference>
<dbReference type="NCBIfam" id="NF010189">
    <property type="entry name" value="PRK13668.1"/>
    <property type="match status" value="1"/>
</dbReference>
<dbReference type="Pfam" id="PF07285">
    <property type="entry name" value="DUF1444"/>
    <property type="match status" value="1"/>
</dbReference>
<dbReference type="PIRSF" id="PIRSF012562">
    <property type="entry name" value="UCP012562"/>
    <property type="match status" value="1"/>
</dbReference>
<reference key="1">
    <citation type="journal article" date="2006" name="J. Bacteriol.">
        <title>Whole-genome sequence of Listeria welshimeri reveals common steps in genome reduction with Listeria innocua as compared to Listeria monocytogenes.</title>
        <authorList>
            <person name="Hain T."/>
            <person name="Steinweg C."/>
            <person name="Kuenne C.T."/>
            <person name="Billion A."/>
            <person name="Ghai R."/>
            <person name="Chatterjee S.S."/>
            <person name="Domann E."/>
            <person name="Kaerst U."/>
            <person name="Goesmann A."/>
            <person name="Bekel T."/>
            <person name="Bartels D."/>
            <person name="Kaiser O."/>
            <person name="Meyer F."/>
            <person name="Puehler A."/>
            <person name="Weisshaar B."/>
            <person name="Wehland J."/>
            <person name="Liang C."/>
            <person name="Dandekar T."/>
            <person name="Lampidis R."/>
            <person name="Kreft J."/>
            <person name="Goebel W."/>
            <person name="Chakraborty T."/>
        </authorList>
    </citation>
    <scope>NUCLEOTIDE SEQUENCE [LARGE SCALE GENOMIC DNA]</scope>
    <source>
        <strain>ATCC 35897 / DSM 20650 / CCUG 15529 / CIP 8149 / NCTC 11857 / SLCC 5334 / V8</strain>
    </source>
</reference>
<protein>
    <recommendedName>
        <fullName evidence="1">UPF0354 protein lwe1624</fullName>
    </recommendedName>
</protein>
<name>Y1624_LISW6</name>
<feature type="chain" id="PRO_0000300608" description="UPF0354 protein lwe1624">
    <location>
        <begin position="1"/>
        <end position="266"/>
    </location>
</feature>